<name>MBR2_ARATH</name>
<keyword id="KW-0287">Flowering</keyword>
<keyword id="KW-0341">Growth regulation</keyword>
<keyword id="KW-0479">Metal-binding</keyword>
<keyword id="KW-1185">Reference proteome</keyword>
<keyword id="KW-0808">Transferase</keyword>
<keyword id="KW-0833">Ubl conjugation pathway</keyword>
<keyword id="KW-0862">Zinc</keyword>
<keyword id="KW-0863">Zinc-finger</keyword>
<organism>
    <name type="scientific">Arabidopsis thaliana</name>
    <name type="common">Mouse-ear cress</name>
    <dbReference type="NCBI Taxonomy" id="3702"/>
    <lineage>
        <taxon>Eukaryota</taxon>
        <taxon>Viridiplantae</taxon>
        <taxon>Streptophyta</taxon>
        <taxon>Embryophyta</taxon>
        <taxon>Tracheophyta</taxon>
        <taxon>Spermatophyta</taxon>
        <taxon>Magnoliopsida</taxon>
        <taxon>eudicotyledons</taxon>
        <taxon>Gunneridae</taxon>
        <taxon>Pentapetalae</taxon>
        <taxon>rosids</taxon>
        <taxon>malvids</taxon>
        <taxon>Brassicales</taxon>
        <taxon>Brassicaceae</taxon>
        <taxon>Camelineae</taxon>
        <taxon>Arabidopsis</taxon>
    </lineage>
</organism>
<gene>
    <name type="primary">MBR2</name>
    <name type="synonym">HIP1</name>
    <name type="ordered locus">At4g34040</name>
</gene>
<accession>O49500</accession>
<evidence type="ECO:0000255" key="1">
    <source>
        <dbReference type="PROSITE-ProRule" id="PRU00175"/>
    </source>
</evidence>
<evidence type="ECO:0000256" key="2">
    <source>
        <dbReference type="SAM" id="MobiDB-lite"/>
    </source>
</evidence>
<evidence type="ECO:0000269" key="3">
    <source>
    </source>
</evidence>
<evidence type="ECO:0000269" key="4">
    <source>
    </source>
</evidence>
<evidence type="ECO:0000305" key="5"/>
<comment type="function">
    <text evidence="3 4">E3 ubiquitin-protein ligase that functions as a regulator of MED25 stability by targeting MED25 for degradation in a RING-H2-dependent way. Proteasome-dependent degradation of MED25 seems to activate its function as positive regulator of FLOWERING LOCUS T (FT) and is important to induce the expression of FT and consequently to promote flowering. May function downstream of HAL3 and be required for HAL3-regulated plant growth. Activation of MBR2 by HAL3 may lead to the degradation of cell cycle suppressors, resulting in enhancement of cell division and plant growth.</text>
</comment>
<comment type="catalytic activity">
    <reaction>
        <text>S-ubiquitinyl-[E2 ubiquitin-conjugating enzyme]-L-cysteine + [acceptor protein]-L-lysine = [E2 ubiquitin-conjugating enzyme]-L-cysteine + N(6)-ubiquitinyl-[acceptor protein]-L-lysine.</text>
        <dbReference type="EC" id="2.3.2.27"/>
    </reaction>
</comment>
<comment type="pathway">
    <text>Protein modification; protein ubiquitination.</text>
</comment>
<comment type="subunit">
    <text evidence="4">Interacts with MED25 and UBC11.</text>
</comment>
<comment type="domain">
    <text evidence="5">The RING-type zinc finger domain mediates binding to an E2 ubiquitin-conjugating enzyme.</text>
</comment>
<comment type="disruption phenotype">
    <text evidence="4">No visible phenotype under normal growth conditions, but the double mutant plants mbr1-1 and mbr2-1 show delayed flowering.</text>
</comment>
<comment type="similarity">
    <text evidence="5">Belongs to the RING-type zinc finger family.</text>
</comment>
<feature type="chain" id="PRO_0000429417" description="E3 ubiquitin-protein ligase MBR2">
    <location>
        <begin position="1"/>
        <end position="666"/>
    </location>
</feature>
<feature type="zinc finger region" description="RING-type; atypical" evidence="1">
    <location>
        <begin position="619"/>
        <end position="660"/>
    </location>
</feature>
<feature type="region of interest" description="Disordered" evidence="2">
    <location>
        <begin position="1"/>
        <end position="58"/>
    </location>
</feature>
<feature type="region of interest" description="Disordered" evidence="2">
    <location>
        <begin position="73"/>
        <end position="95"/>
    </location>
</feature>
<feature type="region of interest" description="Disordered" evidence="2">
    <location>
        <begin position="155"/>
        <end position="179"/>
    </location>
</feature>
<feature type="region of interest" description="Disordered" evidence="2">
    <location>
        <begin position="221"/>
        <end position="329"/>
    </location>
</feature>
<feature type="region of interest" description="Disordered" evidence="2">
    <location>
        <begin position="400"/>
        <end position="433"/>
    </location>
</feature>
<feature type="region of interest" description="Disordered" evidence="2">
    <location>
        <begin position="457"/>
        <end position="491"/>
    </location>
</feature>
<feature type="compositionally biased region" description="Polar residues" evidence="2">
    <location>
        <begin position="1"/>
        <end position="14"/>
    </location>
</feature>
<feature type="compositionally biased region" description="Polar residues" evidence="2">
    <location>
        <begin position="23"/>
        <end position="35"/>
    </location>
</feature>
<feature type="compositionally biased region" description="Polar residues" evidence="2">
    <location>
        <begin position="42"/>
        <end position="58"/>
    </location>
</feature>
<feature type="compositionally biased region" description="Polar residues" evidence="2">
    <location>
        <begin position="73"/>
        <end position="88"/>
    </location>
</feature>
<feature type="compositionally biased region" description="Low complexity" evidence="2">
    <location>
        <begin position="221"/>
        <end position="239"/>
    </location>
</feature>
<feature type="compositionally biased region" description="Polar residues" evidence="2">
    <location>
        <begin position="258"/>
        <end position="268"/>
    </location>
</feature>
<feature type="compositionally biased region" description="Polar residues" evidence="2">
    <location>
        <begin position="286"/>
        <end position="303"/>
    </location>
</feature>
<feature type="compositionally biased region" description="Polar residues" evidence="2">
    <location>
        <begin position="414"/>
        <end position="433"/>
    </location>
</feature>
<feature type="mutagenesis site" description="Unable to promote MED25 degradation; when associated with A-642." evidence="4">
    <original>H</original>
    <variation>A</variation>
    <location>
        <position position="639"/>
    </location>
</feature>
<feature type="mutagenesis site" description="Unable to promote MED25 degradation; when associated with A-639." evidence="4">
    <original>H</original>
    <variation>A</variation>
    <location>
        <position position="642"/>
    </location>
</feature>
<reference key="1">
    <citation type="journal article" date="1999" name="Nature">
        <title>Sequence and analysis of chromosome 4 of the plant Arabidopsis thaliana.</title>
        <authorList>
            <person name="Mayer K.F.X."/>
            <person name="Schueller C."/>
            <person name="Wambutt R."/>
            <person name="Murphy G."/>
            <person name="Volckaert G."/>
            <person name="Pohl T."/>
            <person name="Duesterhoeft A."/>
            <person name="Stiekema W."/>
            <person name="Entian K.-D."/>
            <person name="Terryn N."/>
            <person name="Harris B."/>
            <person name="Ansorge W."/>
            <person name="Brandt P."/>
            <person name="Grivell L.A."/>
            <person name="Rieger M."/>
            <person name="Weichselgartner M."/>
            <person name="de Simone V."/>
            <person name="Obermaier B."/>
            <person name="Mache R."/>
            <person name="Mueller M."/>
            <person name="Kreis M."/>
            <person name="Delseny M."/>
            <person name="Puigdomenech P."/>
            <person name="Watson M."/>
            <person name="Schmidtheini T."/>
            <person name="Reichert B."/>
            <person name="Portetelle D."/>
            <person name="Perez-Alonso M."/>
            <person name="Boutry M."/>
            <person name="Bancroft I."/>
            <person name="Vos P."/>
            <person name="Hoheisel J."/>
            <person name="Zimmermann W."/>
            <person name="Wedler H."/>
            <person name="Ridley P."/>
            <person name="Langham S.-A."/>
            <person name="McCullagh B."/>
            <person name="Bilham L."/>
            <person name="Robben J."/>
            <person name="van der Schueren J."/>
            <person name="Grymonprez B."/>
            <person name="Chuang Y.-J."/>
            <person name="Vandenbussche F."/>
            <person name="Braeken M."/>
            <person name="Weltjens I."/>
            <person name="Voet M."/>
            <person name="Bastiaens I."/>
            <person name="Aert R."/>
            <person name="Defoor E."/>
            <person name="Weitzenegger T."/>
            <person name="Bothe G."/>
            <person name="Ramsperger U."/>
            <person name="Hilbert H."/>
            <person name="Braun M."/>
            <person name="Holzer E."/>
            <person name="Brandt A."/>
            <person name="Peters S."/>
            <person name="van Staveren M."/>
            <person name="Dirkse W."/>
            <person name="Mooijman P."/>
            <person name="Klein Lankhorst R."/>
            <person name="Rose M."/>
            <person name="Hauf J."/>
            <person name="Koetter P."/>
            <person name="Berneiser S."/>
            <person name="Hempel S."/>
            <person name="Feldpausch M."/>
            <person name="Lamberth S."/>
            <person name="Van den Daele H."/>
            <person name="De Keyser A."/>
            <person name="Buysshaert C."/>
            <person name="Gielen J."/>
            <person name="Villarroel R."/>
            <person name="De Clercq R."/>
            <person name="van Montagu M."/>
            <person name="Rogers J."/>
            <person name="Cronin A."/>
            <person name="Quail M.A."/>
            <person name="Bray-Allen S."/>
            <person name="Clark L."/>
            <person name="Doggett J."/>
            <person name="Hall S."/>
            <person name="Kay M."/>
            <person name="Lennard N."/>
            <person name="McLay K."/>
            <person name="Mayes R."/>
            <person name="Pettett A."/>
            <person name="Rajandream M.A."/>
            <person name="Lyne M."/>
            <person name="Benes V."/>
            <person name="Rechmann S."/>
            <person name="Borkova D."/>
            <person name="Bloecker H."/>
            <person name="Scharfe M."/>
            <person name="Grimm M."/>
            <person name="Loehnert T.-H."/>
            <person name="Dose S."/>
            <person name="de Haan M."/>
            <person name="Maarse A.C."/>
            <person name="Schaefer M."/>
            <person name="Mueller-Auer S."/>
            <person name="Gabel C."/>
            <person name="Fuchs M."/>
            <person name="Fartmann B."/>
            <person name="Granderath K."/>
            <person name="Dauner D."/>
            <person name="Herzl A."/>
            <person name="Neumann S."/>
            <person name="Argiriou A."/>
            <person name="Vitale D."/>
            <person name="Liguori R."/>
            <person name="Piravandi E."/>
            <person name="Massenet O."/>
            <person name="Quigley F."/>
            <person name="Clabauld G."/>
            <person name="Muendlein A."/>
            <person name="Felber R."/>
            <person name="Schnabl S."/>
            <person name="Hiller R."/>
            <person name="Schmidt W."/>
            <person name="Lecharny A."/>
            <person name="Aubourg S."/>
            <person name="Chefdor F."/>
            <person name="Cooke R."/>
            <person name="Berger C."/>
            <person name="Monfort A."/>
            <person name="Casacuberta E."/>
            <person name="Gibbons T."/>
            <person name="Weber N."/>
            <person name="Vandenbol M."/>
            <person name="Bargues M."/>
            <person name="Terol J."/>
            <person name="Torres A."/>
            <person name="Perez-Perez A."/>
            <person name="Purnelle B."/>
            <person name="Bent E."/>
            <person name="Johnson S."/>
            <person name="Tacon D."/>
            <person name="Jesse T."/>
            <person name="Heijnen L."/>
            <person name="Schwarz S."/>
            <person name="Scholler P."/>
            <person name="Heber S."/>
            <person name="Francs P."/>
            <person name="Bielke C."/>
            <person name="Frishman D."/>
            <person name="Haase D."/>
            <person name="Lemcke K."/>
            <person name="Mewes H.-W."/>
            <person name="Stocker S."/>
            <person name="Zaccaria P."/>
            <person name="Bevan M."/>
            <person name="Wilson R.K."/>
            <person name="de la Bastide M."/>
            <person name="Habermann K."/>
            <person name="Parnell L."/>
            <person name="Dedhia N."/>
            <person name="Gnoj L."/>
            <person name="Schutz K."/>
            <person name="Huang E."/>
            <person name="Spiegel L."/>
            <person name="Sekhon M."/>
            <person name="Murray J."/>
            <person name="Sheet P."/>
            <person name="Cordes M."/>
            <person name="Abu-Threideh J."/>
            <person name="Stoneking T."/>
            <person name="Kalicki J."/>
            <person name="Graves T."/>
            <person name="Harmon G."/>
            <person name="Edwards J."/>
            <person name="Latreille P."/>
            <person name="Courtney L."/>
            <person name="Cloud J."/>
            <person name="Abbott A."/>
            <person name="Scott K."/>
            <person name="Johnson D."/>
            <person name="Minx P."/>
            <person name="Bentley D."/>
            <person name="Fulton B."/>
            <person name="Miller N."/>
            <person name="Greco T."/>
            <person name="Kemp K."/>
            <person name="Kramer J."/>
            <person name="Fulton L."/>
            <person name="Mardis E."/>
            <person name="Dante M."/>
            <person name="Pepin K."/>
            <person name="Hillier L.W."/>
            <person name="Nelson J."/>
            <person name="Spieth J."/>
            <person name="Ryan E."/>
            <person name="Andrews S."/>
            <person name="Geisel C."/>
            <person name="Layman D."/>
            <person name="Du H."/>
            <person name="Ali J."/>
            <person name="Berghoff A."/>
            <person name="Jones K."/>
            <person name="Drone K."/>
            <person name="Cotton M."/>
            <person name="Joshu C."/>
            <person name="Antonoiu B."/>
            <person name="Zidanic M."/>
            <person name="Strong C."/>
            <person name="Sun H."/>
            <person name="Lamar B."/>
            <person name="Yordan C."/>
            <person name="Ma P."/>
            <person name="Zhong J."/>
            <person name="Preston R."/>
            <person name="Vil D."/>
            <person name="Shekher M."/>
            <person name="Matero A."/>
            <person name="Shah R."/>
            <person name="Swaby I.K."/>
            <person name="O'Shaughnessy A."/>
            <person name="Rodriguez M."/>
            <person name="Hoffman J."/>
            <person name="Till S."/>
            <person name="Granat S."/>
            <person name="Shohdy N."/>
            <person name="Hasegawa A."/>
            <person name="Hameed A."/>
            <person name="Lodhi M."/>
            <person name="Johnson A."/>
            <person name="Chen E."/>
            <person name="Marra M.A."/>
            <person name="Martienssen R."/>
            <person name="McCombie W.R."/>
        </authorList>
    </citation>
    <scope>NUCLEOTIDE SEQUENCE [LARGE SCALE GENOMIC DNA]</scope>
    <source>
        <strain>cv. Columbia</strain>
    </source>
</reference>
<reference key="2">
    <citation type="journal article" date="2017" name="Plant J.">
        <title>Araport11: a complete reannotation of the Arabidopsis thaliana reference genome.</title>
        <authorList>
            <person name="Cheng C.Y."/>
            <person name="Krishnakumar V."/>
            <person name="Chan A.P."/>
            <person name="Thibaud-Nissen F."/>
            <person name="Schobel S."/>
            <person name="Town C.D."/>
        </authorList>
    </citation>
    <scope>GENOME REANNOTATION</scope>
    <source>
        <strain>cv. Columbia</strain>
    </source>
</reference>
<reference key="3">
    <citation type="submission" date="2004-12" db="EMBL/GenBank/DDBJ databases">
        <title>Arabidopsis ORF clones.</title>
        <authorList>
            <person name="Cheuk R.F."/>
            <person name="Chen H."/>
            <person name="Kim C.J."/>
            <person name="Shinn P."/>
            <person name="Ecker J.R."/>
        </authorList>
    </citation>
    <scope>NUCLEOTIDE SEQUENCE [LARGE SCALE GENOMIC DNA]</scope>
    <source>
        <strain>cv. Columbia</strain>
    </source>
</reference>
<reference key="4">
    <citation type="submission" date="2006-07" db="EMBL/GenBank/DDBJ databases">
        <title>Large-scale analysis of RIKEN Arabidopsis full-length (RAFL) cDNAs.</title>
        <authorList>
            <person name="Totoki Y."/>
            <person name="Seki M."/>
            <person name="Ishida J."/>
            <person name="Nakajima M."/>
            <person name="Enju A."/>
            <person name="Kamiya A."/>
            <person name="Narusaka M."/>
            <person name="Shin-i T."/>
            <person name="Nakagawa M."/>
            <person name="Sakamoto N."/>
            <person name="Oishi K."/>
            <person name="Kohara Y."/>
            <person name="Kobayashi M."/>
            <person name="Toyoda A."/>
            <person name="Sakaki Y."/>
            <person name="Sakurai T."/>
            <person name="Iida K."/>
            <person name="Akiyama K."/>
            <person name="Satou M."/>
            <person name="Toyoda T."/>
            <person name="Konagaya A."/>
            <person name="Carninci P."/>
            <person name="Kawai J."/>
            <person name="Hayashizaki Y."/>
            <person name="Shinozaki K."/>
        </authorList>
    </citation>
    <scope>NUCLEOTIDE SEQUENCE [LARGE SCALE MRNA]</scope>
    <source>
        <strain>cv. Columbia</strain>
    </source>
</reference>
<reference key="5">
    <citation type="journal article" date="2009" name="Nat. Cell Biol.">
        <title>OsHAL3 mediates a new pathway in the light-regulated growth of rice.</title>
        <authorList>
            <person name="Sun S.Y."/>
            <person name="Chao D.Y."/>
            <person name="Li X.M."/>
            <person name="Shi M."/>
            <person name="Gao J.P."/>
            <person name="Zhu M.Z."/>
            <person name="Yang H.Q."/>
            <person name="Luan S."/>
            <person name="Lin H.X."/>
        </authorList>
    </citation>
    <scope>FUNCTION</scope>
</reference>
<reference key="6">
    <citation type="journal article" date="2012" name="Plant Physiol.">
        <title>Proteasome-mediated turnover of Arabidopsis MED25 is coupled to the activation of FLOWERING LOCUS T transcription.</title>
        <authorList>
            <person name="Inigo S."/>
            <person name="Giraldez A.N."/>
            <person name="Chory J."/>
            <person name="Cerdan P.D."/>
        </authorList>
    </citation>
    <scope>FUNCTION</scope>
    <scope>INTERACTION WITH MED25 AND UBC11</scope>
    <scope>MUTAGENESIS OF HIS-639 AND HIS-642</scope>
    <scope>DISRUPTION PHENOTYPE</scope>
</reference>
<dbReference type="EC" id="2.3.2.27"/>
<dbReference type="EMBL" id="AL021961">
    <property type="protein sequence ID" value="CAA17568.1"/>
    <property type="molecule type" value="Genomic_DNA"/>
</dbReference>
<dbReference type="EMBL" id="AL161584">
    <property type="protein sequence ID" value="CAB80121.1"/>
    <property type="molecule type" value="Genomic_DNA"/>
</dbReference>
<dbReference type="EMBL" id="CP002687">
    <property type="protein sequence ID" value="AEE86313.1"/>
    <property type="molecule type" value="Genomic_DNA"/>
</dbReference>
<dbReference type="EMBL" id="BT015366">
    <property type="protein sequence ID" value="AAU05489.1"/>
    <property type="molecule type" value="mRNA"/>
</dbReference>
<dbReference type="EMBL" id="BT020341">
    <property type="protein sequence ID" value="AAV85696.1"/>
    <property type="molecule type" value="mRNA"/>
</dbReference>
<dbReference type="EMBL" id="AK229265">
    <property type="protein sequence ID" value="BAF01129.1"/>
    <property type="molecule type" value="mRNA"/>
</dbReference>
<dbReference type="PIR" id="T05432">
    <property type="entry name" value="T05432"/>
</dbReference>
<dbReference type="RefSeq" id="NP_195130.1">
    <property type="nucleotide sequence ID" value="NM_119565.4"/>
</dbReference>
<dbReference type="SMR" id="O49500"/>
<dbReference type="BioGRID" id="14832">
    <property type="interactions" value="1"/>
</dbReference>
<dbReference type="FunCoup" id="O49500">
    <property type="interactions" value="2278"/>
</dbReference>
<dbReference type="STRING" id="3702.O49500"/>
<dbReference type="GlyGen" id="O49500">
    <property type="glycosylation" value="1 site"/>
</dbReference>
<dbReference type="iPTMnet" id="O49500"/>
<dbReference type="PaxDb" id="3702-AT4G34040.1"/>
<dbReference type="ProteomicsDB" id="238356"/>
<dbReference type="EnsemblPlants" id="AT4G34040.1">
    <property type="protein sequence ID" value="AT4G34040.1"/>
    <property type="gene ID" value="AT4G34040"/>
</dbReference>
<dbReference type="GeneID" id="829550"/>
<dbReference type="Gramene" id="AT4G34040.1">
    <property type="protein sequence ID" value="AT4G34040.1"/>
    <property type="gene ID" value="AT4G34040"/>
</dbReference>
<dbReference type="KEGG" id="ath:AT4G34040"/>
<dbReference type="Araport" id="AT4G34040"/>
<dbReference type="TAIR" id="AT4G34040">
    <property type="gene designation" value="MBR2"/>
</dbReference>
<dbReference type="eggNOG" id="KOG0800">
    <property type="taxonomic scope" value="Eukaryota"/>
</dbReference>
<dbReference type="HOGENOM" id="CLU_024479_0_0_1"/>
<dbReference type="InParanoid" id="O49500"/>
<dbReference type="OMA" id="DMEPCCV"/>
<dbReference type="PhylomeDB" id="O49500"/>
<dbReference type="UniPathway" id="UPA00143"/>
<dbReference type="PRO" id="PR:O49500"/>
<dbReference type="Proteomes" id="UP000006548">
    <property type="component" value="Chromosome 4"/>
</dbReference>
<dbReference type="ExpressionAtlas" id="O49500">
    <property type="expression patterns" value="baseline and differential"/>
</dbReference>
<dbReference type="GO" id="GO:0061630">
    <property type="term" value="F:ubiquitin protein ligase activity"/>
    <property type="evidence" value="ECO:0007669"/>
    <property type="project" value="InterPro"/>
</dbReference>
<dbReference type="GO" id="GO:0008270">
    <property type="term" value="F:zinc ion binding"/>
    <property type="evidence" value="ECO:0007669"/>
    <property type="project" value="UniProtKB-KW"/>
</dbReference>
<dbReference type="GO" id="GO:0009908">
    <property type="term" value="P:flower development"/>
    <property type="evidence" value="ECO:0007669"/>
    <property type="project" value="UniProtKB-KW"/>
</dbReference>
<dbReference type="GO" id="GO:0043161">
    <property type="term" value="P:proteasome-mediated ubiquitin-dependent protein catabolic process"/>
    <property type="evidence" value="ECO:0000314"/>
    <property type="project" value="UniProtKB"/>
</dbReference>
<dbReference type="GO" id="GO:0016567">
    <property type="term" value="P:protein ubiquitination"/>
    <property type="evidence" value="ECO:0007669"/>
    <property type="project" value="UniProtKB-UniPathway"/>
</dbReference>
<dbReference type="GO" id="GO:0010228">
    <property type="term" value="P:vegetative to reproductive phase transition of meristem"/>
    <property type="evidence" value="ECO:0000316"/>
    <property type="project" value="UniProtKB"/>
</dbReference>
<dbReference type="CDD" id="cd23113">
    <property type="entry name" value="RING-H2_MBR"/>
    <property type="match status" value="1"/>
</dbReference>
<dbReference type="FunFam" id="3.30.40.10:FF:000309">
    <property type="entry name" value="E3 ubiquitin-protein ligase MBR2"/>
    <property type="match status" value="1"/>
</dbReference>
<dbReference type="Gene3D" id="3.30.40.10">
    <property type="entry name" value="Zinc/RING finger domain, C3HC4 (zinc finger)"/>
    <property type="match status" value="1"/>
</dbReference>
<dbReference type="InterPro" id="IPR045191">
    <property type="entry name" value="MBR1/2-like"/>
</dbReference>
<dbReference type="InterPro" id="IPR001841">
    <property type="entry name" value="Znf_RING"/>
</dbReference>
<dbReference type="InterPro" id="IPR013083">
    <property type="entry name" value="Znf_RING/FYVE/PHD"/>
</dbReference>
<dbReference type="PANTHER" id="PTHR22937:SF224">
    <property type="entry name" value="E3 UBIQUITIN-PROTEIN LIGASE MBR1-RELATED"/>
    <property type="match status" value="1"/>
</dbReference>
<dbReference type="PANTHER" id="PTHR22937">
    <property type="entry name" value="E3 UBIQUITIN-PROTEIN LIGASE RNF165"/>
    <property type="match status" value="1"/>
</dbReference>
<dbReference type="Pfam" id="PF13639">
    <property type="entry name" value="zf-RING_2"/>
    <property type="match status" value="1"/>
</dbReference>
<dbReference type="SMART" id="SM00184">
    <property type="entry name" value="RING"/>
    <property type="match status" value="1"/>
</dbReference>
<dbReference type="SUPFAM" id="SSF57850">
    <property type="entry name" value="RING/U-box"/>
    <property type="match status" value="1"/>
</dbReference>
<dbReference type="PROSITE" id="PS50089">
    <property type="entry name" value="ZF_RING_2"/>
    <property type="match status" value="1"/>
</dbReference>
<protein>
    <recommendedName>
        <fullName>E3 ubiquitin-protein ligase MBR2</fullName>
        <ecNumber>2.3.2.27</ecNumber>
    </recommendedName>
    <alternativeName>
        <fullName>HAL3-interacting protein 1 homolog</fullName>
        <shortName>AtHIP1</shortName>
    </alternativeName>
    <alternativeName>
        <fullName>MED25-binding RING-H2 protein 2</fullName>
    </alternativeName>
    <alternativeName>
        <fullName>RING-H2 finger MBR2</fullName>
    </alternativeName>
    <alternativeName>
        <fullName evidence="5">RING-type E3 ubiquitin transferase MBR2</fullName>
    </alternativeName>
</protein>
<sequence>MQGPRSTGDSSTGINYADGEPICSTNSETTSNNILNPVDVQFPNNTTGSGRPTYASSSSHVVQNHNWWSFGESSSRLGPSDHLNSNGSKTDRQLLSDGYGFEEGQSGMLLPGESFLRGSSSSHMLSHVNLGKDMDIGSGLQTSGVVIRHNNCETSLGSSSQTAEERSSGPGSSLGGLGSSCKRKALEGAPSHSFPGESHGCFFQTENGAWNEGLAQYDASSSLSLSMPSQNSPNVNNQSGLPEPRFGLGGGRAVTASAFPSTRSTETISRPGRRLNPGQPPESVAFSFTQSGSSVRQQQQLPATSPFVDPLDARAIPVTGSSSSGDGQPSMIHLPALTRNIHQFAWSASSSSRANSMPEEGLSPWDAPRINSEQPVFTTPANETRNPVQDQFCWSFTRGNPSTSGDSPFVPRAGSSSGIHGLQPNPTWVTPHNQSRISEVAPWSLFPSIESESATHGASLPLLPTGPSVSSNEAAAPSGSSSRSHRSRQRRSGLLLERQNDHLHLRHLGRSLAADNDGRNRLISEIRQVLSAMRRGENLRFEDYMVFDPLIYQGMAEMHDRHRDMRLDVDNMSYEELLALGERIGDVSTGLSEEVILKVMKQHKHTSSAAGSHQDMEPCCVCQEEYAEGDDLGTLGCGHEFHTACVKQWLMLKNLCPICKTVALST</sequence>
<proteinExistence type="evidence at protein level"/>